<evidence type="ECO:0000250" key="1">
    <source>
        <dbReference type="UniProtKB" id="Q14684"/>
    </source>
</evidence>
<evidence type="ECO:0000256" key="2">
    <source>
        <dbReference type="SAM" id="MobiDB-lite"/>
    </source>
</evidence>
<evidence type="ECO:0000269" key="3">
    <source>
    </source>
</evidence>
<evidence type="ECO:0000269" key="4">
    <source>
    </source>
</evidence>
<evidence type="ECO:0000269" key="5">
    <source>
    </source>
</evidence>
<evidence type="ECO:0000305" key="6"/>
<keyword id="KW-0007">Acetylation</keyword>
<keyword id="KW-0010">Activator</keyword>
<keyword id="KW-0053">Apoptosis</keyword>
<keyword id="KW-0158">Chromosome</keyword>
<keyword id="KW-0164">Citrullination</keyword>
<keyword id="KW-0507">mRNA processing</keyword>
<keyword id="KW-0508">mRNA splicing</keyword>
<keyword id="KW-0539">Nucleus</keyword>
<keyword id="KW-0597">Phosphoprotein</keyword>
<keyword id="KW-1185">Reference proteome</keyword>
<keyword id="KW-0804">Transcription</keyword>
<keyword id="KW-0805">Transcription regulation</keyword>
<reference key="1">
    <citation type="journal article" date="2009" name="PLoS Biol.">
        <title>Lineage-specific biology revealed by a finished genome assembly of the mouse.</title>
        <authorList>
            <person name="Church D.M."/>
            <person name="Goodstadt L."/>
            <person name="Hillier L.W."/>
            <person name="Zody M.C."/>
            <person name="Goldstein S."/>
            <person name="She X."/>
            <person name="Bult C.J."/>
            <person name="Agarwala R."/>
            <person name="Cherry J.L."/>
            <person name="DiCuccio M."/>
            <person name="Hlavina W."/>
            <person name="Kapustin Y."/>
            <person name="Meric P."/>
            <person name="Maglott D."/>
            <person name="Birtle Z."/>
            <person name="Marques A.C."/>
            <person name="Graves T."/>
            <person name="Zhou S."/>
            <person name="Teague B."/>
            <person name="Potamousis K."/>
            <person name="Churas C."/>
            <person name="Place M."/>
            <person name="Herschleb J."/>
            <person name="Runnheim R."/>
            <person name="Forrest D."/>
            <person name="Amos-Landgraf J."/>
            <person name="Schwartz D.C."/>
            <person name="Cheng Z."/>
            <person name="Lindblad-Toh K."/>
            <person name="Eichler E.E."/>
            <person name="Ponting C.P."/>
        </authorList>
    </citation>
    <scope>NUCLEOTIDE SEQUENCE [LARGE SCALE GENOMIC DNA]</scope>
    <source>
        <strain>C57BL/6J</strain>
    </source>
</reference>
<reference key="2">
    <citation type="journal article" date="2004" name="Genome Res.">
        <title>The status, quality, and expansion of the NIH full-length cDNA project: the Mammalian Gene Collection (MGC).</title>
        <authorList>
            <consortium name="The MGC Project Team"/>
        </authorList>
    </citation>
    <scope>NUCLEOTIDE SEQUENCE [LARGE SCALE MRNA]</scope>
    <source>
        <strain>FVB/N</strain>
        <tissue>Mammary tumor</tissue>
    </source>
</reference>
<reference key="3">
    <citation type="journal article" date="2007" name="PLoS Genet.">
        <title>Rrp1b, a new candidate susceptibility gene for breast cancer progression and metastasis.</title>
        <authorList>
            <person name="Crawford N.P."/>
            <person name="Qian X."/>
            <person name="Ziogas A."/>
            <person name="Papageorge A.G."/>
            <person name="Boersma B.J."/>
            <person name="Walker R.C."/>
            <person name="Lukes L."/>
            <person name="Rowe W.L."/>
            <person name="Zhang J."/>
            <person name="Ambs S."/>
            <person name="Lowy D.R."/>
            <person name="Anton-Culver H."/>
            <person name="Hunter K.W."/>
        </authorList>
    </citation>
    <scope>FUNCTION</scope>
    <scope>INTERACTION WITH SIPA1</scope>
</reference>
<reference key="4">
    <citation type="journal article" date="2014" name="Nature">
        <title>Citrullination regulates pluripotency and histone H1 binding to chromatin.</title>
        <authorList>
            <person name="Christophorou M.A."/>
            <person name="Castelo-Branco G."/>
            <person name="Halley-Stott R.P."/>
            <person name="Oliveira C.S."/>
            <person name="Loos R."/>
            <person name="Radzisheuskaya A."/>
            <person name="Mowen K.A."/>
            <person name="Bertone P."/>
            <person name="Silva J.C."/>
            <person name="Zernicka-Goetz M."/>
            <person name="Nielsen M.L."/>
            <person name="Gurdon J.B."/>
            <person name="Kouzarides T."/>
        </authorList>
    </citation>
    <scope>CITRULLINATION AT ARG-678</scope>
</reference>
<reference key="5">
    <citation type="journal article" date="2014" name="Oncogene">
        <title>RRP1B is a metastasis modifier that regulates the expression of alternative mRNA isoforms through interactions with SRSF1.</title>
        <authorList>
            <consortium name="NISC Comparative Sequencing Program"/>
            <person name="Lee M."/>
            <person name="Dworkin A.M."/>
            <person name="Gildea D."/>
            <person name="Trivedi N.S."/>
            <person name="Moorhead G.B."/>
            <person name="Crawford N.P."/>
        </authorList>
    </citation>
    <scope>FUNCTION</scope>
</reference>
<accession>Q91YK2</accession>
<accession>B0V2W7</accession>
<dbReference type="EMBL" id="CT033797">
    <property type="status" value="NOT_ANNOTATED_CDS"/>
    <property type="molecule type" value="Genomic_DNA"/>
</dbReference>
<dbReference type="EMBL" id="BC016569">
    <property type="protein sequence ID" value="AAH16569.1"/>
    <property type="molecule type" value="mRNA"/>
</dbReference>
<dbReference type="CCDS" id="CCDS28613.1"/>
<dbReference type="RefSeq" id="NP_082520.2">
    <property type="nucleotide sequence ID" value="NM_028244.2"/>
</dbReference>
<dbReference type="SMR" id="Q91YK2"/>
<dbReference type="BioGRID" id="215383">
    <property type="interactions" value="47"/>
</dbReference>
<dbReference type="FunCoup" id="Q91YK2">
    <property type="interactions" value="3173"/>
</dbReference>
<dbReference type="STRING" id="10090.ENSMUSP00000080085"/>
<dbReference type="iPTMnet" id="Q91YK2"/>
<dbReference type="PhosphoSitePlus" id="Q91YK2"/>
<dbReference type="SwissPalm" id="Q91YK2"/>
<dbReference type="jPOST" id="Q91YK2"/>
<dbReference type="PaxDb" id="10090-ENSMUSP00000080085"/>
<dbReference type="PeptideAtlas" id="Q91YK2"/>
<dbReference type="ProteomicsDB" id="260842"/>
<dbReference type="Pumba" id="Q91YK2"/>
<dbReference type="Antibodypedia" id="9978">
    <property type="antibodies" value="90 antibodies from 18 providers"/>
</dbReference>
<dbReference type="Ensembl" id="ENSMUST00000081339.13">
    <property type="protein sequence ID" value="ENSMUSP00000080085.7"/>
    <property type="gene ID" value="ENSMUSG00000058392.14"/>
</dbReference>
<dbReference type="GeneID" id="72462"/>
<dbReference type="KEGG" id="mmu:72462"/>
<dbReference type="UCSC" id="uc008bvt.2">
    <property type="organism name" value="mouse"/>
</dbReference>
<dbReference type="AGR" id="MGI:1919712"/>
<dbReference type="CTD" id="23076"/>
<dbReference type="MGI" id="MGI:1919712">
    <property type="gene designation" value="Rrp1b"/>
</dbReference>
<dbReference type="VEuPathDB" id="HostDB:ENSMUSG00000058392"/>
<dbReference type="eggNOG" id="KOG3911">
    <property type="taxonomic scope" value="Eukaryota"/>
</dbReference>
<dbReference type="GeneTree" id="ENSGT00390000011821"/>
<dbReference type="HOGENOM" id="CLU_022876_3_0_1"/>
<dbReference type="InParanoid" id="Q91YK2"/>
<dbReference type="OMA" id="PPALYCK"/>
<dbReference type="OrthoDB" id="2019504at2759"/>
<dbReference type="PhylomeDB" id="Q91YK2"/>
<dbReference type="TreeFam" id="TF315294"/>
<dbReference type="BioGRID-ORCS" id="72462">
    <property type="hits" value="3 hits in 80 CRISPR screens"/>
</dbReference>
<dbReference type="ChiTaRS" id="Rrp1b">
    <property type="organism name" value="mouse"/>
</dbReference>
<dbReference type="PRO" id="PR:Q91YK2"/>
<dbReference type="Proteomes" id="UP000000589">
    <property type="component" value="Chromosome 17"/>
</dbReference>
<dbReference type="RNAct" id="Q91YK2">
    <property type="molecule type" value="protein"/>
</dbReference>
<dbReference type="Bgee" id="ENSMUSG00000058392">
    <property type="expression patterns" value="Expressed in embryonic post-anal tail and 271 other cell types or tissues"/>
</dbReference>
<dbReference type="ExpressionAtlas" id="Q91YK2">
    <property type="expression patterns" value="baseline and differential"/>
</dbReference>
<dbReference type="GO" id="GO:0000791">
    <property type="term" value="C:euchromatin"/>
    <property type="evidence" value="ECO:0000314"/>
    <property type="project" value="MGI"/>
</dbReference>
<dbReference type="GO" id="GO:0001652">
    <property type="term" value="C:granular component"/>
    <property type="evidence" value="ECO:0000250"/>
    <property type="project" value="UniProtKB"/>
</dbReference>
<dbReference type="GO" id="GO:0000792">
    <property type="term" value="C:heterochromatin"/>
    <property type="evidence" value="ECO:0000314"/>
    <property type="project" value="MGI"/>
</dbReference>
<dbReference type="GO" id="GO:0005730">
    <property type="term" value="C:nucleolus"/>
    <property type="evidence" value="ECO:0000250"/>
    <property type="project" value="UniProtKB"/>
</dbReference>
<dbReference type="GO" id="GO:0005654">
    <property type="term" value="C:nucleoplasm"/>
    <property type="evidence" value="ECO:0007669"/>
    <property type="project" value="UniProtKB-SubCell"/>
</dbReference>
<dbReference type="GO" id="GO:0005634">
    <property type="term" value="C:nucleus"/>
    <property type="evidence" value="ECO:0000314"/>
    <property type="project" value="MGI"/>
</dbReference>
<dbReference type="GO" id="GO:0030688">
    <property type="term" value="C:preribosome, small subunit precursor"/>
    <property type="evidence" value="ECO:0007669"/>
    <property type="project" value="InterPro"/>
</dbReference>
<dbReference type="GO" id="GO:0003713">
    <property type="term" value="F:transcription coactivator activity"/>
    <property type="evidence" value="ECO:0000250"/>
    <property type="project" value="UniProtKB"/>
</dbReference>
<dbReference type="GO" id="GO:0006915">
    <property type="term" value="P:apoptotic process"/>
    <property type="evidence" value="ECO:0007669"/>
    <property type="project" value="UniProtKB-KW"/>
</dbReference>
<dbReference type="GO" id="GO:0098586">
    <property type="term" value="P:cellular response to virus"/>
    <property type="evidence" value="ECO:0007669"/>
    <property type="project" value="Ensembl"/>
</dbReference>
<dbReference type="GO" id="GO:0006397">
    <property type="term" value="P:mRNA processing"/>
    <property type="evidence" value="ECO:0007669"/>
    <property type="project" value="UniProtKB-KW"/>
</dbReference>
<dbReference type="GO" id="GO:0034260">
    <property type="term" value="P:negative regulation of GTPase activity"/>
    <property type="evidence" value="ECO:0000315"/>
    <property type="project" value="UniProtKB"/>
</dbReference>
<dbReference type="GO" id="GO:0043923">
    <property type="term" value="P:positive regulation by host of viral transcription"/>
    <property type="evidence" value="ECO:0007669"/>
    <property type="project" value="Ensembl"/>
</dbReference>
<dbReference type="GO" id="GO:0043065">
    <property type="term" value="P:positive regulation of apoptotic process"/>
    <property type="evidence" value="ECO:0000250"/>
    <property type="project" value="UniProtKB"/>
</dbReference>
<dbReference type="GO" id="GO:0045944">
    <property type="term" value="P:positive regulation of transcription by RNA polymerase II"/>
    <property type="evidence" value="ECO:0000250"/>
    <property type="project" value="UniProtKB"/>
</dbReference>
<dbReference type="GO" id="GO:0043484">
    <property type="term" value="P:regulation of RNA splicing"/>
    <property type="evidence" value="ECO:0000315"/>
    <property type="project" value="UniProtKB"/>
</dbReference>
<dbReference type="GO" id="GO:0008380">
    <property type="term" value="P:RNA splicing"/>
    <property type="evidence" value="ECO:0007669"/>
    <property type="project" value="UniProtKB-KW"/>
</dbReference>
<dbReference type="GO" id="GO:0006364">
    <property type="term" value="P:rRNA processing"/>
    <property type="evidence" value="ECO:0007669"/>
    <property type="project" value="InterPro"/>
</dbReference>
<dbReference type="InterPro" id="IPR010301">
    <property type="entry name" value="RRP1"/>
</dbReference>
<dbReference type="PANTHER" id="PTHR13026">
    <property type="entry name" value="NNP-1 PROTEIN NOVEL NUCLEAR PROTEIN 1 NOP52"/>
    <property type="match status" value="1"/>
</dbReference>
<dbReference type="PANTHER" id="PTHR13026:SF2">
    <property type="entry name" value="RIBOSOMAL RNA PROCESSING PROTEIN 1 HOMOLOG B"/>
    <property type="match status" value="1"/>
</dbReference>
<dbReference type="Pfam" id="PF05997">
    <property type="entry name" value="Nop52"/>
    <property type="match status" value="1"/>
</dbReference>
<feature type="chain" id="PRO_0000340116" description="Ribosomal RNA processing protein 1 homolog B">
    <location>
        <begin position="1"/>
        <end position="724"/>
    </location>
</feature>
<feature type="region of interest" description="Disordered" evidence="2">
    <location>
        <begin position="331"/>
        <end position="576"/>
    </location>
</feature>
<feature type="region of interest" description="Disordered" evidence="2">
    <location>
        <begin position="625"/>
        <end position="649"/>
    </location>
</feature>
<feature type="region of interest" description="Disordered" evidence="2">
    <location>
        <begin position="687"/>
        <end position="724"/>
    </location>
</feature>
<feature type="compositionally biased region" description="Basic residues" evidence="2">
    <location>
        <begin position="373"/>
        <end position="386"/>
    </location>
</feature>
<feature type="compositionally biased region" description="Basic residues" evidence="2">
    <location>
        <begin position="448"/>
        <end position="461"/>
    </location>
</feature>
<feature type="compositionally biased region" description="Low complexity" evidence="2">
    <location>
        <begin position="483"/>
        <end position="496"/>
    </location>
</feature>
<feature type="compositionally biased region" description="Polar residues" evidence="2">
    <location>
        <begin position="513"/>
        <end position="528"/>
    </location>
</feature>
<feature type="compositionally biased region" description="Polar residues" evidence="2">
    <location>
        <begin position="548"/>
        <end position="564"/>
    </location>
</feature>
<feature type="compositionally biased region" description="Polar residues" evidence="2">
    <location>
        <begin position="640"/>
        <end position="649"/>
    </location>
</feature>
<feature type="compositionally biased region" description="Low complexity" evidence="2">
    <location>
        <begin position="694"/>
        <end position="706"/>
    </location>
</feature>
<feature type="modified residue" description="Phosphoserine" evidence="1">
    <location>
        <position position="336"/>
    </location>
</feature>
<feature type="modified residue" description="Phosphoserine" evidence="1">
    <location>
        <position position="370"/>
    </location>
</feature>
<feature type="modified residue" description="Phosphoserine" evidence="1">
    <location>
        <position position="432"/>
    </location>
</feature>
<feature type="modified residue" description="Phosphoserine" evidence="1">
    <location>
        <position position="438"/>
    </location>
</feature>
<feature type="modified residue" description="Phosphoserine" evidence="1">
    <location>
        <position position="494"/>
    </location>
</feature>
<feature type="modified residue" description="N6-acetyllysine" evidence="1">
    <location>
        <position position="618"/>
    </location>
</feature>
<feature type="modified residue" description="Phosphoserine" evidence="1">
    <location>
        <position position="668"/>
    </location>
</feature>
<feature type="modified residue" description="Phosphoserine" evidence="1">
    <location>
        <position position="672"/>
    </location>
</feature>
<feature type="modified residue" description="Citrulline" evidence="5">
    <location>
        <position position="678"/>
    </location>
</feature>
<feature type="modified residue" description="Phosphothreonine" evidence="1">
    <location>
        <position position="694"/>
    </location>
</feature>
<feature type="modified residue" description="Phosphoserine" evidence="1">
    <location>
        <position position="698"/>
    </location>
</feature>
<feature type="modified residue" description="Phosphoserine" evidence="1">
    <location>
        <position position="701"/>
    </location>
</feature>
<feature type="sequence conflict" description="In Ref. 2; AAH16569." evidence="6" ref="2">
    <original>V</original>
    <variation>A</variation>
    <location>
        <position position="209"/>
    </location>
</feature>
<feature type="sequence conflict" description="In Ref. 2; AAH16569." evidence="6" ref="2">
    <original>Q</original>
    <variation>E</variation>
    <location>
        <position position="229"/>
    </location>
</feature>
<sequence length="724" mass="80582">MALAMQSSEFQFAQRLASSEKGVRDRAVRKLRQYLSARTQSDTGSFSQEELLKIWKGLFYCMWVQDEPLLQEELANIISQLIHVVNSLEAQYLFIQTFWQTMNREWQGIDKLQLDKYYMLIRLVLRQSFEVLKRNAWEESQITLFLDILMKEILSPESQSPNGVRTHLIDVYLEELTTVGGAELLADQNLKLIDPFCRIAAKTKDHTLVQTVARGVFEVIVDQSACVPQESVEERKTKEDGSGFPTKALACRKAVSGKKAALDECLRDGVIGSRERDICAALKDSGSPLQFDYKAVADRLLEIANSKSTPPFNRKRLCRLVRKFQDLCEGNGAPLSSAEDNGQRRHKRKRKKLLESEKGDTVSPAAEEDSGGHIHKKKRKKRKRSHFQPDTQNLDAVAVPKVPDSESEPDTAQRQAPCGQACVTEPTAEAVSSIGENSSKPTPVMPIHNKRKRPRKKKLRAHKEICKSTTLPQEDMSKNDAVSGHSQSSAAHISSSEGVQAQKRKRKLGALPDSSSDLPVQKSGTPTSPVEGKDGQTTLPRCKRSQKKTASSTLDPCDPSSQKPAISKKKKKTMKLMSNGVLESNPGQIQALGSNRTLKKPLKTEDDFVKFDTRFLPKPLFFRKAKNSSATRPQGPAGQLNKTPSSSKKVTFGLNRNMTAEFKKTDKSILVSPTGLSRVAFNPEQRPLHGVLKTATSSPASTPLSPMRLPATTPKRRPRAADFF</sequence>
<proteinExistence type="evidence at protein level"/>
<protein>
    <recommendedName>
        <fullName>Ribosomal RNA processing protein 1 homolog B</fullName>
    </recommendedName>
    <alternativeName>
        <fullName>RRP1-like protein B</fullName>
    </alternativeName>
</protein>
<gene>
    <name type="primary">Rrp1b</name>
</gene>
<organism>
    <name type="scientific">Mus musculus</name>
    <name type="common">Mouse</name>
    <dbReference type="NCBI Taxonomy" id="10090"/>
    <lineage>
        <taxon>Eukaryota</taxon>
        <taxon>Metazoa</taxon>
        <taxon>Chordata</taxon>
        <taxon>Craniata</taxon>
        <taxon>Vertebrata</taxon>
        <taxon>Euteleostomi</taxon>
        <taxon>Mammalia</taxon>
        <taxon>Eutheria</taxon>
        <taxon>Euarchontoglires</taxon>
        <taxon>Glires</taxon>
        <taxon>Rodentia</taxon>
        <taxon>Myomorpha</taxon>
        <taxon>Muroidea</taxon>
        <taxon>Muridae</taxon>
        <taxon>Murinae</taxon>
        <taxon>Mus</taxon>
        <taxon>Mus</taxon>
    </lineage>
</organism>
<name>RRP1B_MOUSE</name>
<comment type="function">
    <text evidence="1 3 4">Positively regulates DNA damage-induced apoptosis by acting as a transcriptional coactivator of proapoptotic target genes of the transcriptional activator E2F1 (By similarity). Likely to play a role in ribosome biogenesis by targeting serine/threonine protein phosphatase PP1 to the nucleolus (By similarity). Involved in regulation of mRNA splicing (PubMed:23604122). Inhibits SIPA1 GTPase activity (PubMed:18081427). Involved in regulating expression of extracellular matrix genes (PubMed:18081427). Associates with chromatin and may play a role in modulating chromatin structure (By similarity).</text>
</comment>
<comment type="subunit">
    <text evidence="1 3">Interacts with the transcriptional activator E2F1 (By similarity). Interacts with serine/threonine-protein phosphatase PP1 subunits PPP1CB and PPP1CC but not with PPP1CA (By similarity). Interacts with 60S ribosomal proteins RPL5 and RPL27, ribosomal processing protein RRP1/NNP1 and other nucleolar proteins including NOP2/NOL1 and FBL (By similarity). Also interacts with nucleolar protein NPM1/B23 (By similarity). Interacts with splicing factor SRSF1 and LUC7L3/CROP (By similarity). Interacts with GTPase activator SIPA1 (PubMed:18081427). Interacts with H1-10, NCL, PARP1, TRIM28 and YBX3 (By similarity).</text>
</comment>
<comment type="subcellular location">
    <subcellularLocation>
        <location evidence="1">Nucleus</location>
        <location evidence="1">Nucleolus</location>
    </subcellularLocation>
    <subcellularLocation>
        <location evidence="1">Nucleus</location>
        <location evidence="1">Nucleoplasm</location>
    </subcellularLocation>
    <subcellularLocation>
        <location evidence="1">Chromosome</location>
    </subcellularLocation>
    <text evidence="1">Predominantly located in the nucleolus with a small amount found in the nucleoplasm. Associates with the perichromatin region during metaphase and with cytoplasmic foci during telophase before reaccumulation in the nucleolus during G2. Associates with heterochromatin and euchromatin.</text>
</comment>
<comment type="PTM">
    <text evidence="5">Citrullinated by PADI4.</text>
</comment>
<comment type="similarity">
    <text evidence="6">Belongs to the RRP1 family.</text>
</comment>